<gene>
    <name type="primary">IRC22</name>
    <name type="ordered locus">ZYRO0D09438g</name>
</gene>
<comment type="function">
    <text>Is probably involved in a pathway contributing to genomic integrity.</text>
</comment>
<comment type="subcellular location">
    <subcellularLocation>
        <location evidence="1">Endoplasmic reticulum membrane</location>
        <topology evidence="1">Single-pass type I membrane protein</topology>
    </subcellularLocation>
</comment>
<comment type="similarity">
    <text evidence="4">Belongs to the IRC22 family.</text>
</comment>
<comment type="sequence caution" evidence="4">
    <conflict type="erroneous initiation">
        <sequence resource="EMBL-CDS" id="CAR27912"/>
    </conflict>
    <text>Extended N-terminus.</text>
</comment>
<reference key="1">
    <citation type="journal article" date="2009" name="Genome Res.">
        <title>Comparative genomics of protoploid Saccharomycetaceae.</title>
        <authorList>
            <consortium name="The Genolevures Consortium"/>
            <person name="Souciet J.-L."/>
            <person name="Dujon B."/>
            <person name="Gaillardin C."/>
            <person name="Johnston M."/>
            <person name="Baret P.V."/>
            <person name="Cliften P."/>
            <person name="Sherman D.J."/>
            <person name="Weissenbach J."/>
            <person name="Westhof E."/>
            <person name="Wincker P."/>
            <person name="Jubin C."/>
            <person name="Poulain J."/>
            <person name="Barbe V."/>
            <person name="Segurens B."/>
            <person name="Artiguenave F."/>
            <person name="Anthouard V."/>
            <person name="Vacherie B."/>
            <person name="Val M.-E."/>
            <person name="Fulton R.S."/>
            <person name="Minx P."/>
            <person name="Wilson R."/>
            <person name="Durrens P."/>
            <person name="Jean G."/>
            <person name="Marck C."/>
            <person name="Martin T."/>
            <person name="Nikolski M."/>
            <person name="Rolland T."/>
            <person name="Seret M.-L."/>
            <person name="Casaregola S."/>
            <person name="Despons L."/>
            <person name="Fairhead C."/>
            <person name="Fischer G."/>
            <person name="Lafontaine I."/>
            <person name="Leh V."/>
            <person name="Lemaire M."/>
            <person name="de Montigny J."/>
            <person name="Neuveglise C."/>
            <person name="Thierry A."/>
            <person name="Blanc-Lenfle I."/>
            <person name="Bleykasten C."/>
            <person name="Diffels J."/>
            <person name="Fritsch E."/>
            <person name="Frangeul L."/>
            <person name="Goeffon A."/>
            <person name="Jauniaux N."/>
            <person name="Kachouri-Lafond R."/>
            <person name="Payen C."/>
            <person name="Potier S."/>
            <person name="Pribylova L."/>
            <person name="Ozanne C."/>
            <person name="Richard G.-F."/>
            <person name="Sacerdot C."/>
            <person name="Straub M.-L."/>
            <person name="Talla E."/>
        </authorList>
    </citation>
    <scope>NUCLEOTIDE SEQUENCE [LARGE SCALE GENOMIC DNA]</scope>
    <source>
        <strain>ATCC 2623 / CBS 732 / BCRC 21506 / NBRC 1130 / NCYC 568 / NRRL Y-229</strain>
    </source>
</reference>
<feature type="signal peptide" evidence="2">
    <location>
        <begin position="1"/>
        <end position="21"/>
    </location>
</feature>
<feature type="chain" id="PRO_0000399091" description="Increased recombination centers protein 22">
    <location>
        <begin position="22"/>
        <end position="227"/>
    </location>
</feature>
<feature type="topological domain" description="Lumenal" evidence="2">
    <location>
        <begin position="22"/>
        <end position="172"/>
    </location>
</feature>
<feature type="transmembrane region" description="Helical" evidence="2">
    <location>
        <begin position="173"/>
        <end position="193"/>
    </location>
</feature>
<feature type="topological domain" description="Cytoplasmic" evidence="2">
    <location>
        <begin position="194"/>
        <end position="227"/>
    </location>
</feature>
<feature type="region of interest" description="Disordered" evidence="3">
    <location>
        <begin position="199"/>
        <end position="227"/>
    </location>
</feature>
<sequence>MKLFQLTLFLLVNAFLALASSESVDVESSSNETAVEEPSTIDFDVGYNILEHLDTDLSRGVEFSMQEVATFNYSFTNNEKVNVSVVGVAGSVISTPDGYQVANITEQPIGPVPIGVNETANFQAGVQLILPEGNFYMLPVLNVMKDGEPLRVGIRPLLITVNPPPLSFFNPSFLSVQILLGLLIAGATYAFITFDKSETKRKPAKNAKPVAVDQSWLPDTYKKPEKP</sequence>
<proteinExistence type="inferred from homology"/>
<evidence type="ECO:0000250" key="1"/>
<evidence type="ECO:0000255" key="2"/>
<evidence type="ECO:0000256" key="3">
    <source>
        <dbReference type="SAM" id="MobiDB-lite"/>
    </source>
</evidence>
<evidence type="ECO:0000305" key="4"/>
<name>IRC22_ZYGRC</name>
<dbReference type="EMBL" id="CU928176">
    <property type="protein sequence ID" value="CAR27912.1"/>
    <property type="status" value="ALT_INIT"/>
    <property type="molecule type" value="Genomic_DNA"/>
</dbReference>
<dbReference type="RefSeq" id="XP_002496845.1">
    <property type="nucleotide sequence ID" value="XM_002496800.1"/>
</dbReference>
<dbReference type="FunCoup" id="C5DVU3">
    <property type="interactions" value="41"/>
</dbReference>
<dbReference type="GeneID" id="8204102"/>
<dbReference type="KEGG" id="zro:ZYRO0D09438g"/>
<dbReference type="HOGENOM" id="CLU_078554_1_0_1"/>
<dbReference type="InParanoid" id="C5DVU3"/>
<dbReference type="Proteomes" id="UP000008536">
    <property type="component" value="Chromosome D"/>
</dbReference>
<dbReference type="GO" id="GO:0005789">
    <property type="term" value="C:endoplasmic reticulum membrane"/>
    <property type="evidence" value="ECO:0007669"/>
    <property type="project" value="UniProtKB-SubCell"/>
</dbReference>
<dbReference type="InterPro" id="IPR005595">
    <property type="entry name" value="TRAP_alpha"/>
</dbReference>
<dbReference type="Pfam" id="PF03896">
    <property type="entry name" value="TRAP_alpha"/>
    <property type="match status" value="1"/>
</dbReference>
<keyword id="KW-0256">Endoplasmic reticulum</keyword>
<keyword id="KW-0472">Membrane</keyword>
<keyword id="KW-1185">Reference proteome</keyword>
<keyword id="KW-0732">Signal</keyword>
<keyword id="KW-0812">Transmembrane</keyword>
<keyword id="KW-1133">Transmembrane helix</keyword>
<organism>
    <name type="scientific">Zygosaccharomyces rouxii (strain ATCC 2623 / CBS 732 / NBRC 1130 / NCYC 568 / NRRL Y-229)</name>
    <dbReference type="NCBI Taxonomy" id="559307"/>
    <lineage>
        <taxon>Eukaryota</taxon>
        <taxon>Fungi</taxon>
        <taxon>Dikarya</taxon>
        <taxon>Ascomycota</taxon>
        <taxon>Saccharomycotina</taxon>
        <taxon>Saccharomycetes</taxon>
        <taxon>Saccharomycetales</taxon>
        <taxon>Saccharomycetaceae</taxon>
        <taxon>Zygosaccharomyces</taxon>
    </lineage>
</organism>
<protein>
    <recommendedName>
        <fullName>Increased recombination centers protein 22</fullName>
    </recommendedName>
</protein>
<accession>C5DVU3</accession>